<gene>
    <name type="primary">Mdh2</name>
    <name type="synonym">Mor1</name>
</gene>
<evidence type="ECO:0000250" key="1">
    <source>
        <dbReference type="UniProtKB" id="P00346"/>
    </source>
</evidence>
<evidence type="ECO:0000250" key="2">
    <source>
        <dbReference type="UniProtKB" id="P08249"/>
    </source>
</evidence>
<evidence type="ECO:0000250" key="3">
    <source>
        <dbReference type="UniProtKB" id="P40926"/>
    </source>
</evidence>
<evidence type="ECO:0000250" key="4">
    <source>
        <dbReference type="UniProtKB" id="Q32LG3"/>
    </source>
</evidence>
<evidence type="ECO:0000255" key="5">
    <source>
        <dbReference type="PROSITE-ProRule" id="PRU10004"/>
    </source>
</evidence>
<evidence type="ECO:0000269" key="6">
    <source>
    </source>
</evidence>
<evidence type="ECO:0000269" key="7">
    <source>
    </source>
</evidence>
<evidence type="ECO:0000269" key="8">
    <source>
    </source>
</evidence>
<evidence type="ECO:0000305" key="9"/>
<evidence type="ECO:0007744" key="10">
    <source>
    </source>
</evidence>
<sequence>MLSALARPVGAALRRSFSTSAQNNAKVAVLGASGGIGQPLSLLLKNSPLVSRLTLYDIAHTPGVAADLSHIETRANVKGYLGPEQLPDCLKGCDVVVIPAGVPRKPGMTRDDLFNTNATIVATLTAACAQHCPEAMICIISNPVNSTIPITAEVFKKHGVYNPNKIFGVTTLDIVRANTFVAELKGLDPARVNVPVIGGHAGKTIIPLISQCTPKVDFPQDQLATLTGRIQEAGTEVVKAKAGAGSATLSMAYAGARFVFSLVDAMNGKEGVIECSFVQSKETECTYFSTPLLLGKKGLEKNLGIGKITPFEEKMIAEAIPELKASIKKGEDFVKNMK</sequence>
<comment type="catalytic activity">
    <reaction evidence="5">
        <text>(S)-malate + NAD(+) = oxaloacetate + NADH + H(+)</text>
        <dbReference type="Rhea" id="RHEA:21432"/>
        <dbReference type="ChEBI" id="CHEBI:15378"/>
        <dbReference type="ChEBI" id="CHEBI:15589"/>
        <dbReference type="ChEBI" id="CHEBI:16452"/>
        <dbReference type="ChEBI" id="CHEBI:57540"/>
        <dbReference type="ChEBI" id="CHEBI:57945"/>
        <dbReference type="EC" id="1.1.1.37"/>
    </reaction>
</comment>
<comment type="activity regulation">
    <text evidence="3">Enzyme activity is enhanced by acetylation.</text>
</comment>
<comment type="subunit">
    <text evidence="1">Homodimer.</text>
</comment>
<comment type="subcellular location">
    <subcellularLocation>
        <location evidence="7">Mitochondrion matrix</location>
    </subcellularLocation>
</comment>
<comment type="tissue specificity">
    <text evidence="6">Expressed in flagella of epididymal sperm.</text>
</comment>
<comment type="PTM">
    <text evidence="3">Acetylation is enhanced after treatment either with trichostin A (TCA) or with nicotinamide (NAM) with the appearance of tri- and tetraacetylations. Glucose also increases acetylation.</text>
</comment>
<comment type="similarity">
    <text evidence="9">Belongs to the LDH/MDH superfamily. MDH type 1 family.</text>
</comment>
<organism>
    <name type="scientific">Rattus norvegicus</name>
    <name type="common">Rat</name>
    <dbReference type="NCBI Taxonomy" id="10116"/>
    <lineage>
        <taxon>Eukaryota</taxon>
        <taxon>Metazoa</taxon>
        <taxon>Chordata</taxon>
        <taxon>Craniata</taxon>
        <taxon>Vertebrata</taxon>
        <taxon>Euteleostomi</taxon>
        <taxon>Mammalia</taxon>
        <taxon>Eutheria</taxon>
        <taxon>Euarchontoglires</taxon>
        <taxon>Glires</taxon>
        <taxon>Rodentia</taxon>
        <taxon>Myomorpha</taxon>
        <taxon>Muroidea</taxon>
        <taxon>Muridae</taxon>
        <taxon>Murinae</taxon>
        <taxon>Rattus</taxon>
    </lineage>
</organism>
<name>MDHM_RAT</name>
<keyword id="KW-0007">Acetylation</keyword>
<keyword id="KW-0903">Direct protein sequencing</keyword>
<keyword id="KW-0325">Glycoprotein</keyword>
<keyword id="KW-0496">Mitochondrion</keyword>
<keyword id="KW-0520">NAD</keyword>
<keyword id="KW-0560">Oxidoreductase</keyword>
<keyword id="KW-0597">Phosphoprotein</keyword>
<keyword id="KW-1185">Reference proteome</keyword>
<keyword id="KW-0809">Transit peptide</keyword>
<keyword id="KW-0816">Tricarboxylic acid cycle</keyword>
<feature type="transit peptide" description="Mitochondrion" evidence="8">
    <location>
        <begin position="1"/>
        <end position="24"/>
    </location>
</feature>
<feature type="chain" id="PRO_0000018631" description="Malate dehydrogenase, mitochondrial">
    <location>
        <begin position="25"/>
        <end position="338"/>
    </location>
</feature>
<feature type="active site" description="Proton acceptor" evidence="1">
    <location>
        <position position="200"/>
    </location>
</feature>
<feature type="binding site" evidence="3">
    <location>
        <begin position="31"/>
        <end position="37"/>
    </location>
    <ligand>
        <name>NAD(+)</name>
        <dbReference type="ChEBI" id="CHEBI:57540"/>
    </ligand>
</feature>
<feature type="binding site" evidence="3">
    <location>
        <position position="57"/>
    </location>
    <ligand>
        <name>NAD(+)</name>
        <dbReference type="ChEBI" id="CHEBI:57540"/>
    </ligand>
</feature>
<feature type="binding site" evidence="5">
    <location>
        <position position="104"/>
    </location>
    <ligand>
        <name>substrate</name>
    </ligand>
</feature>
<feature type="binding site" evidence="5">
    <location>
        <position position="110"/>
    </location>
    <ligand>
        <name>substrate</name>
    </ligand>
</feature>
<feature type="binding site" evidence="3">
    <location>
        <position position="117"/>
    </location>
    <ligand>
        <name>NAD(+)</name>
        <dbReference type="ChEBI" id="CHEBI:57540"/>
    </ligand>
</feature>
<feature type="binding site" evidence="3">
    <location>
        <begin position="140"/>
        <end position="142"/>
    </location>
    <ligand>
        <name>NAD(+)</name>
        <dbReference type="ChEBI" id="CHEBI:57540"/>
    </ligand>
</feature>
<feature type="binding site" evidence="5">
    <location>
        <position position="142"/>
    </location>
    <ligand>
        <name>substrate</name>
    </ligand>
</feature>
<feature type="binding site" evidence="5">
    <location>
        <position position="176"/>
    </location>
    <ligand>
        <name>substrate</name>
    </ligand>
</feature>
<feature type="binding site" evidence="3">
    <location>
        <position position="251"/>
    </location>
    <ligand>
        <name>NAD(+)</name>
        <dbReference type="ChEBI" id="CHEBI:57540"/>
    </ligand>
</feature>
<feature type="modified residue" description="N6-acetyllysine; alternate" evidence="2">
    <location>
        <position position="78"/>
    </location>
</feature>
<feature type="modified residue" description="N6-succinyllysine; alternate" evidence="2">
    <location>
        <position position="78"/>
    </location>
</feature>
<feature type="modified residue" description="N6-acetyllysine; alternate" evidence="2">
    <location>
        <position position="91"/>
    </location>
</feature>
<feature type="modified residue" description="N6-succinyllysine; alternate" evidence="2">
    <location>
        <position position="91"/>
    </location>
</feature>
<feature type="modified residue" description="N6-acetyllysine" evidence="3">
    <location>
        <position position="165"/>
    </location>
</feature>
<feature type="modified residue" description="N6-acetyllysine; alternate" evidence="4">
    <location>
        <position position="185"/>
    </location>
</feature>
<feature type="modified residue" description="N6-succinyllysine; alternate" evidence="2">
    <location>
        <position position="185"/>
    </location>
</feature>
<feature type="modified residue" description="N6-succinyllysine" evidence="2">
    <location>
        <position position="203"/>
    </location>
</feature>
<feature type="modified residue" description="N6-acetyllysine; alternate" evidence="2">
    <location>
        <position position="215"/>
    </location>
</feature>
<feature type="modified residue" description="N6-succinyllysine; alternate" evidence="2">
    <location>
        <position position="215"/>
    </location>
</feature>
<feature type="modified residue" description="N6-acetyllysine; alternate" evidence="2">
    <location>
        <position position="239"/>
    </location>
</feature>
<feature type="modified residue" description="N6-malonyllysine; alternate" evidence="4">
    <location>
        <position position="239"/>
    </location>
</feature>
<feature type="modified residue" description="N6-succinyllysine; alternate" evidence="4">
    <location>
        <position position="239"/>
    </location>
</feature>
<feature type="modified residue" description="Phosphoserine" evidence="10">
    <location>
        <position position="246"/>
    </location>
</feature>
<feature type="modified residue" description="N6-succinyllysine" evidence="2">
    <location>
        <position position="269"/>
    </location>
</feature>
<feature type="modified residue" description="N6-acetyllysine; alternate" evidence="2">
    <location>
        <position position="296"/>
    </location>
</feature>
<feature type="modified residue" description="N6-succinyllysine; alternate" evidence="2">
    <location>
        <position position="296"/>
    </location>
</feature>
<feature type="modified residue" description="N6-acetyllysine; alternate" evidence="3">
    <location>
        <position position="301"/>
    </location>
</feature>
<feature type="modified residue" description="N6-succinyllysine; alternate" evidence="4">
    <location>
        <position position="301"/>
    </location>
</feature>
<feature type="modified residue" description="N6-acetyllysine; alternate" evidence="4">
    <location>
        <position position="307"/>
    </location>
</feature>
<feature type="modified residue" description="N6-malonyllysine; alternate" evidence="3">
    <location>
        <position position="307"/>
    </location>
</feature>
<feature type="modified residue" description="N6-succinyllysine; alternate" evidence="2">
    <location>
        <position position="307"/>
    </location>
</feature>
<feature type="modified residue" description="N6-acetyllysine; alternate" evidence="4">
    <location>
        <position position="314"/>
    </location>
</feature>
<feature type="modified residue" description="N6-succinyllysine; alternate" evidence="2">
    <location>
        <position position="314"/>
    </location>
</feature>
<feature type="modified residue" description="N6-acetyllysine; alternate" evidence="2">
    <location>
        <position position="324"/>
    </location>
</feature>
<feature type="modified residue" description="N6-succinyllysine; alternate" evidence="2">
    <location>
        <position position="324"/>
    </location>
</feature>
<feature type="modified residue" description="Phosphoserine" evidence="3">
    <location>
        <position position="326"/>
    </location>
</feature>
<feature type="modified residue" description="N6-acetyllysine; alternate" evidence="4">
    <location>
        <position position="328"/>
    </location>
</feature>
<feature type="modified residue" description="N6-succinyllysine; alternate" evidence="4">
    <location>
        <position position="328"/>
    </location>
</feature>
<feature type="modified residue" description="N6-acetyllysine; alternate" evidence="3">
    <location>
        <position position="329"/>
    </location>
</feature>
<feature type="modified residue" description="N6-malonyllysine; alternate" evidence="4">
    <location>
        <position position="329"/>
    </location>
</feature>
<feature type="modified residue" description="N6-acetyllysine; alternate" evidence="3">
    <location>
        <position position="335"/>
    </location>
</feature>
<feature type="modified residue" description="N6-succinyllysine; alternate" evidence="2">
    <location>
        <position position="335"/>
    </location>
</feature>
<feature type="glycosylation site" description="O-linked (GlcNAc) serine" evidence="7">
    <location>
        <position position="33"/>
    </location>
</feature>
<feature type="sequence conflict" description="In Ref. 1; CAA27812." evidence="9" ref="1">
    <original>R</original>
    <variation>K</variation>
    <location>
        <position position="229"/>
    </location>
</feature>
<accession>P04636</accession>
<accession>Q6GSM4</accession>
<reference key="1">
    <citation type="journal article" date="1986" name="Nucleic Acids Res.">
        <title>Isolation and nucleotide sequence of a cDNA clone encoding rat mitochondrial malate dehydrogenase.</title>
        <authorList>
            <person name="Grant P.M."/>
            <person name="Tellam J."/>
            <person name="May V.L."/>
            <person name="Strauss A.W."/>
        </authorList>
    </citation>
    <scope>NUCLEOTIDE SEQUENCE [MRNA]</scope>
</reference>
<reference key="2">
    <citation type="journal article" date="2004" name="Genome Res.">
        <title>The status, quality, and expansion of the NIH full-length cDNA project: the Mammalian Gene Collection (MGC).</title>
        <authorList>
            <consortium name="The MGC Project Team"/>
        </authorList>
    </citation>
    <scope>NUCLEOTIDE SEQUENCE [LARGE SCALE MRNA]</scope>
    <source>
        <tissue>Pituitary anterior lobe</tissue>
    </source>
</reference>
<reference key="3">
    <citation type="journal article" date="1987" name="Biochemistry">
        <title>Comparison of the precursor and mature forms of rat heart mitochondrial malate dehydrogenase.</title>
        <authorList>
            <person name="Grant P.M."/>
            <person name="Roderick S.L."/>
            <person name="Grant G.A."/>
            <person name="Banaszak L.J."/>
            <person name="Strauss A.W."/>
        </authorList>
    </citation>
    <scope>PROTEIN SEQUENCE OF 25-338</scope>
</reference>
<reference key="4">
    <citation type="submission" date="2007-07" db="UniProtKB">
        <authorList>
            <person name="Lubec G."/>
            <person name="Afjehi-Sadat L."/>
            <person name="Chen W.-Q."/>
            <person name="Kang S.U."/>
        </authorList>
    </citation>
    <scope>PROTEIN SEQUENCE OF 27-52; 53-74; 166-185; 192-203; 216-239; 242-296 AND 308-324</scope>
    <scope>IDENTIFICATION BY MASS SPECTROMETRY</scope>
    <source>
        <strain>Sprague-Dawley</strain>
        <tissue>Brain</tissue>
        <tissue>Hippocampus</tissue>
        <tissue>Spinal cord</tissue>
    </source>
</reference>
<reference key="5">
    <citation type="journal article" date="2009" name="Reproduction">
        <title>Identification of novel immunodominant epididymal sperm proteins using combinatorial approach.</title>
        <authorList>
            <person name="Khan S.A."/>
            <person name="Suryawanshi A.R."/>
            <person name="Ranpura S.A."/>
            <person name="Jadhav S.V."/>
            <person name="Khole V.V."/>
        </authorList>
    </citation>
    <scope>IDENTIFICATION BY MASS SPECTROMETRY</scope>
    <scope>TISSUE SPECIFICITY</scope>
</reference>
<reference key="6">
    <citation type="journal article" date="2012" name="Nat. Commun.">
        <title>Quantitative maps of protein phosphorylation sites across 14 different rat organs and tissues.</title>
        <authorList>
            <person name="Lundby A."/>
            <person name="Secher A."/>
            <person name="Lage K."/>
            <person name="Nordsborg N.B."/>
            <person name="Dmytriyev A."/>
            <person name="Lundby C."/>
            <person name="Olsen J.V."/>
        </authorList>
    </citation>
    <scope>PHOSPHORYLATION [LARGE SCALE ANALYSIS] AT SER-246</scope>
    <scope>IDENTIFICATION BY MASS SPECTROMETRY [LARGE SCALE ANALYSIS]</scope>
</reference>
<reference key="7">
    <citation type="journal article" date="2013" name="PLoS ONE">
        <title>Discovery and confirmation of O-GlcNAcylated proteins in rat liver mitochondria by combination of mass spectrometry and immunological methods.</title>
        <authorList>
            <person name="Cao W."/>
            <person name="Cao J."/>
            <person name="Huang J."/>
            <person name="Yao J."/>
            <person name="Yan G."/>
            <person name="Xu H."/>
            <person name="Yang P."/>
        </authorList>
    </citation>
    <scope>SUBCELLULAR LOCATION</scope>
    <scope>GLYCOSYLATION AT SER-33</scope>
</reference>
<protein>
    <recommendedName>
        <fullName>Malate dehydrogenase, mitochondrial</fullName>
        <ecNumber>1.1.1.37</ecNumber>
    </recommendedName>
</protein>
<dbReference type="EC" id="1.1.1.37"/>
<dbReference type="EMBL" id="X04240">
    <property type="protein sequence ID" value="CAA27812.1"/>
    <property type="molecule type" value="mRNA"/>
</dbReference>
<dbReference type="EMBL" id="BC063165">
    <property type="protein sequence ID" value="AAH63165.1"/>
    <property type="molecule type" value="mRNA"/>
</dbReference>
<dbReference type="PIR" id="A25509">
    <property type="entry name" value="DERTMM"/>
</dbReference>
<dbReference type="RefSeq" id="NP_112413.2">
    <property type="nucleotide sequence ID" value="NM_031151.2"/>
</dbReference>
<dbReference type="SMR" id="P04636"/>
<dbReference type="BioGRID" id="249687">
    <property type="interactions" value="3"/>
</dbReference>
<dbReference type="FunCoup" id="P04636">
    <property type="interactions" value="2689"/>
</dbReference>
<dbReference type="IntAct" id="P04636">
    <property type="interactions" value="3"/>
</dbReference>
<dbReference type="MINT" id="P04636"/>
<dbReference type="STRING" id="10116.ENSRNOP00000001958"/>
<dbReference type="ChEMBL" id="CHEMBL2176835"/>
<dbReference type="CarbonylDB" id="P04636"/>
<dbReference type="GlyCosmos" id="P04636">
    <property type="glycosylation" value="1 site, No reported glycans"/>
</dbReference>
<dbReference type="GlyGen" id="P04636">
    <property type="glycosylation" value="6 sites, 1 O-linked glycan (6 sites)"/>
</dbReference>
<dbReference type="iPTMnet" id="P04636"/>
<dbReference type="PhosphoSitePlus" id="P04636"/>
<dbReference type="SwissPalm" id="P04636"/>
<dbReference type="jPOST" id="P04636"/>
<dbReference type="PaxDb" id="10116-ENSRNOP00000001958"/>
<dbReference type="Ensembl" id="ENSRNOT00000001958.5">
    <property type="protein sequence ID" value="ENSRNOP00000001958.2"/>
    <property type="gene ID" value="ENSRNOG00000001440.5"/>
</dbReference>
<dbReference type="GeneID" id="81829"/>
<dbReference type="KEGG" id="rno:81829"/>
<dbReference type="UCSC" id="RGD:619719">
    <property type="organism name" value="rat"/>
</dbReference>
<dbReference type="AGR" id="RGD:619719"/>
<dbReference type="CTD" id="4191"/>
<dbReference type="RGD" id="619719">
    <property type="gene designation" value="Mdh2"/>
</dbReference>
<dbReference type="eggNOG" id="KOG1494">
    <property type="taxonomic scope" value="Eukaryota"/>
</dbReference>
<dbReference type="GeneTree" id="ENSGT00390000016686"/>
<dbReference type="HOGENOM" id="CLU_047181_0_1_1"/>
<dbReference type="InParanoid" id="P04636"/>
<dbReference type="OMA" id="ASCAEYI"/>
<dbReference type="OrthoDB" id="755699at2759"/>
<dbReference type="PhylomeDB" id="P04636"/>
<dbReference type="TreeFam" id="TF300834"/>
<dbReference type="Reactome" id="R-RNO-71403">
    <property type="pathway name" value="Citric acid cycle (TCA cycle)"/>
</dbReference>
<dbReference type="Reactome" id="R-RNO-9837999">
    <property type="pathway name" value="Mitochondrial protein degradation"/>
</dbReference>
<dbReference type="Reactome" id="R-RNO-9856872">
    <property type="pathway name" value="Malate-aspartate shuttle"/>
</dbReference>
<dbReference type="PRO" id="PR:P04636"/>
<dbReference type="Proteomes" id="UP000002494">
    <property type="component" value="Chromosome 12"/>
</dbReference>
<dbReference type="Bgee" id="ENSRNOG00000001440">
    <property type="expression patterns" value="Expressed in duodenum and 20 other cell types or tissues"/>
</dbReference>
<dbReference type="GO" id="GO:0005737">
    <property type="term" value="C:cytoplasm"/>
    <property type="evidence" value="ECO:0000318"/>
    <property type="project" value="GO_Central"/>
</dbReference>
<dbReference type="GO" id="GO:0016020">
    <property type="term" value="C:membrane"/>
    <property type="evidence" value="ECO:0000266"/>
    <property type="project" value="RGD"/>
</dbReference>
<dbReference type="GO" id="GO:0005759">
    <property type="term" value="C:mitochondrial matrix"/>
    <property type="evidence" value="ECO:0000314"/>
    <property type="project" value="RGD"/>
</dbReference>
<dbReference type="GO" id="GO:0005739">
    <property type="term" value="C:mitochondrion"/>
    <property type="evidence" value="ECO:0000266"/>
    <property type="project" value="RGD"/>
</dbReference>
<dbReference type="GO" id="GO:0042802">
    <property type="term" value="F:identical protein binding"/>
    <property type="evidence" value="ECO:0000314"/>
    <property type="project" value="RGD"/>
</dbReference>
<dbReference type="GO" id="GO:0030060">
    <property type="term" value="F:L-malate dehydrogenase (NAD+) activity"/>
    <property type="evidence" value="ECO:0000314"/>
    <property type="project" value="RGD"/>
</dbReference>
<dbReference type="GO" id="GO:0046554">
    <property type="term" value="F:L-malate dehydrogenase (NADP+) activity"/>
    <property type="evidence" value="ECO:0000314"/>
    <property type="project" value="RGD"/>
</dbReference>
<dbReference type="GO" id="GO:0016615">
    <property type="term" value="F:malate dehydrogenase activity"/>
    <property type="evidence" value="ECO:0000314"/>
    <property type="project" value="RGD"/>
</dbReference>
<dbReference type="GO" id="GO:0042803">
    <property type="term" value="F:protein homodimerization activity"/>
    <property type="evidence" value="ECO:0000250"/>
    <property type="project" value="UniProtKB"/>
</dbReference>
<dbReference type="GO" id="GO:0051087">
    <property type="term" value="F:protein-folding chaperone binding"/>
    <property type="evidence" value="ECO:0000266"/>
    <property type="project" value="RGD"/>
</dbReference>
<dbReference type="GO" id="GO:0009060">
    <property type="term" value="P:aerobic respiration"/>
    <property type="evidence" value="ECO:0000266"/>
    <property type="project" value="RGD"/>
</dbReference>
<dbReference type="GO" id="GO:0006094">
    <property type="term" value="P:gluconeogenesis"/>
    <property type="evidence" value="ECO:0000266"/>
    <property type="project" value="RGD"/>
</dbReference>
<dbReference type="GO" id="GO:0006108">
    <property type="term" value="P:malate metabolic process"/>
    <property type="evidence" value="ECO:0000314"/>
    <property type="project" value="RGD"/>
</dbReference>
<dbReference type="GO" id="GO:0043490">
    <property type="term" value="P:malate-aspartate shuttle"/>
    <property type="evidence" value="ECO:0000266"/>
    <property type="project" value="RGD"/>
</dbReference>
<dbReference type="GO" id="GO:0006734">
    <property type="term" value="P:NADH metabolic process"/>
    <property type="evidence" value="ECO:0000314"/>
    <property type="project" value="RGD"/>
</dbReference>
<dbReference type="GO" id="GO:0006099">
    <property type="term" value="P:tricarboxylic acid cycle"/>
    <property type="evidence" value="ECO:0000266"/>
    <property type="project" value="RGD"/>
</dbReference>
<dbReference type="CDD" id="cd01337">
    <property type="entry name" value="MDH_glyoxysomal_mitochondrial"/>
    <property type="match status" value="1"/>
</dbReference>
<dbReference type="FunFam" id="3.40.50.720:FF:000013">
    <property type="entry name" value="Malate dehydrogenase"/>
    <property type="match status" value="1"/>
</dbReference>
<dbReference type="FunFam" id="3.90.110.10:FF:000001">
    <property type="entry name" value="Malate dehydrogenase"/>
    <property type="match status" value="1"/>
</dbReference>
<dbReference type="Gene3D" id="3.90.110.10">
    <property type="entry name" value="Lactate dehydrogenase/glycoside hydrolase, family 4, C-terminal"/>
    <property type="match status" value="1"/>
</dbReference>
<dbReference type="Gene3D" id="3.40.50.720">
    <property type="entry name" value="NAD(P)-binding Rossmann-like Domain"/>
    <property type="match status" value="1"/>
</dbReference>
<dbReference type="InterPro" id="IPR001557">
    <property type="entry name" value="L-lactate/malate_DH"/>
</dbReference>
<dbReference type="InterPro" id="IPR022383">
    <property type="entry name" value="Lactate/malate_DH_C"/>
</dbReference>
<dbReference type="InterPro" id="IPR001236">
    <property type="entry name" value="Lactate/malate_DH_N"/>
</dbReference>
<dbReference type="InterPro" id="IPR015955">
    <property type="entry name" value="Lactate_DH/Glyco_Ohase_4_C"/>
</dbReference>
<dbReference type="InterPro" id="IPR001252">
    <property type="entry name" value="Malate_DH_AS"/>
</dbReference>
<dbReference type="InterPro" id="IPR010097">
    <property type="entry name" value="Malate_DH_type1"/>
</dbReference>
<dbReference type="InterPro" id="IPR036291">
    <property type="entry name" value="NAD(P)-bd_dom_sf"/>
</dbReference>
<dbReference type="NCBIfam" id="TIGR01772">
    <property type="entry name" value="MDH_euk_gproteo"/>
    <property type="match status" value="1"/>
</dbReference>
<dbReference type="PANTHER" id="PTHR11540">
    <property type="entry name" value="MALATE AND LACTATE DEHYDROGENASE"/>
    <property type="match status" value="1"/>
</dbReference>
<dbReference type="PANTHER" id="PTHR11540:SF16">
    <property type="entry name" value="MALATE DEHYDROGENASE, MITOCHONDRIAL"/>
    <property type="match status" value="1"/>
</dbReference>
<dbReference type="Pfam" id="PF02866">
    <property type="entry name" value="Ldh_1_C"/>
    <property type="match status" value="1"/>
</dbReference>
<dbReference type="Pfam" id="PF00056">
    <property type="entry name" value="Ldh_1_N"/>
    <property type="match status" value="1"/>
</dbReference>
<dbReference type="PIRSF" id="PIRSF000102">
    <property type="entry name" value="Lac_mal_DH"/>
    <property type="match status" value="1"/>
</dbReference>
<dbReference type="SUPFAM" id="SSF56327">
    <property type="entry name" value="LDH C-terminal domain-like"/>
    <property type="match status" value="1"/>
</dbReference>
<dbReference type="SUPFAM" id="SSF51735">
    <property type="entry name" value="NAD(P)-binding Rossmann-fold domains"/>
    <property type="match status" value="1"/>
</dbReference>
<dbReference type="PROSITE" id="PS00068">
    <property type="entry name" value="MDH"/>
    <property type="match status" value="1"/>
</dbReference>
<proteinExistence type="evidence at protein level"/>